<evidence type="ECO:0000250" key="1"/>
<evidence type="ECO:0000255" key="2"/>
<evidence type="ECO:0000305" key="3"/>
<comment type="function">
    <text evidence="1">An anti-sigma factor for extracytoplasmic function (ECF) sigma factor SigM. ECF sigma factors are held in an inactive form by an anti-sigma factor until released by regulated intramembrane proteolysis (RIP). RIP occurs when an extracytoplasmic signal triggers a concerted proteolytic cascade to transmit information and elicit cellular responses. The membrane-spanning regulatory substrate protein is first cut extracytoplasmically (site-1 protease, S1P), then within the membrane itself (site-2 protease, S2P, Rip1), while cytoplasmic proteases finish degrading the regulatory protein, liberating the sigma factor (By similarity).</text>
</comment>
<comment type="subunit">
    <text evidence="1">Interacts with ECF RNA polymerase sigma factor SigM; this should inhibit the interaction of SigM with the RNA polymerase catalytic core.</text>
</comment>
<comment type="subcellular location">
    <subcellularLocation>
        <location evidence="3">Cell membrane</location>
        <topology evidence="3">Single-pass membrane protein</topology>
    </subcellularLocation>
</comment>
<comment type="domain">
    <text evidence="1">The cytosolic domain interacts with sigma factor SigM.</text>
</comment>
<organism>
    <name type="scientific">Mycobacterium tuberculosis (strain CDC 1551 / Oshkosh)</name>
    <dbReference type="NCBI Taxonomy" id="83331"/>
    <lineage>
        <taxon>Bacteria</taxon>
        <taxon>Bacillati</taxon>
        <taxon>Actinomycetota</taxon>
        <taxon>Actinomycetes</taxon>
        <taxon>Mycobacteriales</taxon>
        <taxon>Mycobacteriaceae</taxon>
        <taxon>Mycobacterium</taxon>
        <taxon>Mycobacterium tuberculosis complex</taxon>
    </lineage>
</organism>
<gene>
    <name type="primary">rsmA</name>
    <name type="ordered locus">MT4031</name>
</gene>
<dbReference type="EMBL" id="AE000516">
    <property type="protein sequence ID" value="AAK48396.1"/>
    <property type="molecule type" value="Genomic_DNA"/>
</dbReference>
<dbReference type="PIR" id="H70850">
    <property type="entry name" value="H70850"/>
</dbReference>
<dbReference type="RefSeq" id="WP_003400148.1">
    <property type="nucleotide sequence ID" value="NZ_KK341228.1"/>
</dbReference>
<dbReference type="KEGG" id="mtc:MT4031"/>
<dbReference type="PATRIC" id="fig|83331.31.peg.4337"/>
<dbReference type="HOGENOM" id="CLU_080969_0_0_11"/>
<dbReference type="Proteomes" id="UP000001020">
    <property type="component" value="Chromosome"/>
</dbReference>
<dbReference type="GO" id="GO:0005886">
    <property type="term" value="C:plasma membrane"/>
    <property type="evidence" value="ECO:0007669"/>
    <property type="project" value="UniProtKB-SubCell"/>
</dbReference>
<keyword id="KW-1003">Cell membrane</keyword>
<keyword id="KW-0472">Membrane</keyword>
<keyword id="KW-1185">Reference proteome</keyword>
<keyword id="KW-0804">Transcription</keyword>
<keyword id="KW-0805">Transcription regulation</keyword>
<keyword id="KW-0812">Transmembrane</keyword>
<keyword id="KW-1133">Transmembrane helix</keyword>
<feature type="chain" id="PRO_0000427884" description="Anti-sigma-M factor RsmA">
    <location>
        <begin position="1"/>
        <end position="254"/>
    </location>
</feature>
<feature type="topological domain" description="Cytoplasmic" evidence="2">
    <location>
        <begin position="1"/>
        <end position="112"/>
    </location>
</feature>
<feature type="transmembrane region" description="Helical" evidence="2">
    <location>
        <begin position="113"/>
        <end position="133"/>
    </location>
</feature>
<feature type="topological domain" description="Extracellular" evidence="2">
    <location>
        <begin position="134"/>
        <end position="254"/>
    </location>
</feature>
<name>RSMAF_MYCTO</name>
<sequence length="254" mass="25769">MSAADKDPDKHSADADPPLTVELLADLQAGLLDDATAARIRSRVRSDPQAQQILRALNRVRRDVAAMGADPAWGPAARPAVVDSISAALRSARPNSSPGAAHAARPHVHPVRMIAGAAGLCAVATAIGVGAVVDAPPPAPSAPTTAQHITVSKPAPVIPLSRPQVLDLLHHTPDYGPPGGPLGDPSRRTSCLSGLGYPASTPVLGAQPIDIDARPAVLLVIPADTPDKLAVFAVAPHCSAADTGLLASTVVPRA</sequence>
<accession>P9WJ64</accession>
<accession>L7N5D7</accession>
<reference key="1">
    <citation type="journal article" date="2002" name="J. Bacteriol.">
        <title>Whole-genome comparison of Mycobacterium tuberculosis clinical and laboratory strains.</title>
        <authorList>
            <person name="Fleischmann R.D."/>
            <person name="Alland D."/>
            <person name="Eisen J.A."/>
            <person name="Carpenter L."/>
            <person name="White O."/>
            <person name="Peterson J.D."/>
            <person name="DeBoy R.T."/>
            <person name="Dodson R.J."/>
            <person name="Gwinn M.L."/>
            <person name="Haft D.H."/>
            <person name="Hickey E.K."/>
            <person name="Kolonay J.F."/>
            <person name="Nelson W.C."/>
            <person name="Umayam L.A."/>
            <person name="Ermolaeva M.D."/>
            <person name="Salzberg S.L."/>
            <person name="Delcher A."/>
            <person name="Utterback T.R."/>
            <person name="Weidman J.F."/>
            <person name="Khouri H.M."/>
            <person name="Gill J."/>
            <person name="Mikula A."/>
            <person name="Bishai W."/>
            <person name="Jacobs W.R. Jr."/>
            <person name="Venter J.C."/>
            <person name="Fraser C.M."/>
        </authorList>
    </citation>
    <scope>NUCLEOTIDE SEQUENCE [LARGE SCALE GENOMIC DNA]</scope>
    <source>
        <strain>CDC 1551 / Oshkosh</strain>
    </source>
</reference>
<proteinExistence type="inferred from homology"/>
<protein>
    <recommendedName>
        <fullName>Anti-sigma-M factor RsmA</fullName>
    </recommendedName>
    <alternativeName>
        <fullName>Regulator of SigM</fullName>
    </alternativeName>
    <alternativeName>
        <fullName>Sigma-M anti-sigma factor RsmA</fullName>
    </alternativeName>
</protein>